<dbReference type="EC" id="4.1.1.20"/>
<dbReference type="EMBL" id="AP004151">
    <property type="protein sequence ID" value="BAD16980.1"/>
    <property type="molecule type" value="Genomic_DNA"/>
</dbReference>
<dbReference type="EMBL" id="AP008208">
    <property type="protein sequence ID" value="BAF08658.1"/>
    <property type="molecule type" value="Genomic_DNA"/>
</dbReference>
<dbReference type="EMBL" id="AP014958">
    <property type="protein sequence ID" value="BAS78484.1"/>
    <property type="molecule type" value="Genomic_DNA"/>
</dbReference>
<dbReference type="EMBL" id="CM000139">
    <property type="protein sequence ID" value="EAZ22869.1"/>
    <property type="status" value="ALT_SEQ"/>
    <property type="molecule type" value="Genomic_DNA"/>
</dbReference>
<dbReference type="EMBL" id="AK067100">
    <property type="protein sequence ID" value="BAG90268.1"/>
    <property type="molecule type" value="mRNA"/>
</dbReference>
<dbReference type="RefSeq" id="XP_015627100.1">
    <property type="nucleotide sequence ID" value="XM_015771614.1"/>
</dbReference>
<dbReference type="SMR" id="Q6ZG77"/>
<dbReference type="FunCoup" id="Q6ZG77">
    <property type="interactions" value="443"/>
</dbReference>
<dbReference type="STRING" id="39947.Q6ZG77"/>
<dbReference type="PaxDb" id="39947-Q6ZG77"/>
<dbReference type="EnsemblPlants" id="Os02t0440000-01">
    <property type="protein sequence ID" value="Os02t0440000-01"/>
    <property type="gene ID" value="Os02g0440000"/>
</dbReference>
<dbReference type="Gramene" id="Os02t0440000-01">
    <property type="protein sequence ID" value="Os02t0440000-01"/>
    <property type="gene ID" value="Os02g0440000"/>
</dbReference>
<dbReference type="KEGG" id="dosa:Os02g0440000"/>
<dbReference type="eggNOG" id="KOG0622">
    <property type="taxonomic scope" value="Eukaryota"/>
</dbReference>
<dbReference type="InParanoid" id="Q6ZG77"/>
<dbReference type="OMA" id="AYCRSMA"/>
<dbReference type="OrthoDB" id="5034579at2759"/>
<dbReference type="BRENDA" id="4.1.1.20">
    <property type="organism ID" value="4460"/>
</dbReference>
<dbReference type="PlantReactome" id="R-OSA-1119273">
    <property type="pathway name" value="Lysine biosynthesis I"/>
</dbReference>
<dbReference type="PlantReactome" id="R-OSA-1119283">
    <property type="pathway name" value="Lysine biosynthesis II"/>
</dbReference>
<dbReference type="PlantReactome" id="R-OSA-1119419">
    <property type="pathway name" value="Lysine biosynthesis VI"/>
</dbReference>
<dbReference type="UniPathway" id="UPA00034">
    <property type="reaction ID" value="UER00027"/>
</dbReference>
<dbReference type="Proteomes" id="UP000000763">
    <property type="component" value="Chromosome 2"/>
</dbReference>
<dbReference type="Proteomes" id="UP000007752">
    <property type="component" value="Chromosome 2"/>
</dbReference>
<dbReference type="Proteomes" id="UP000059680">
    <property type="component" value="Chromosome 2"/>
</dbReference>
<dbReference type="ExpressionAtlas" id="Q6ZG77">
    <property type="expression patterns" value="baseline and differential"/>
</dbReference>
<dbReference type="GO" id="GO:0009507">
    <property type="term" value="C:chloroplast"/>
    <property type="evidence" value="ECO:0007669"/>
    <property type="project" value="UniProtKB-SubCell"/>
</dbReference>
<dbReference type="GO" id="GO:0008836">
    <property type="term" value="F:diaminopimelate decarboxylase activity"/>
    <property type="evidence" value="ECO:0000318"/>
    <property type="project" value="GO_Central"/>
</dbReference>
<dbReference type="GO" id="GO:0009089">
    <property type="term" value="P:lysine biosynthetic process via diaminopimelate"/>
    <property type="evidence" value="ECO:0000318"/>
    <property type="project" value="GO_Central"/>
</dbReference>
<dbReference type="CDD" id="cd06828">
    <property type="entry name" value="PLPDE_III_DapDC"/>
    <property type="match status" value="1"/>
</dbReference>
<dbReference type="FunFam" id="2.40.37.10:FF:000003">
    <property type="entry name" value="Diaminopimelate decarboxylase"/>
    <property type="match status" value="1"/>
</dbReference>
<dbReference type="FunFam" id="3.20.20.10:FF:000003">
    <property type="entry name" value="Diaminopimelate decarboxylase"/>
    <property type="match status" value="1"/>
</dbReference>
<dbReference type="Gene3D" id="3.20.20.10">
    <property type="entry name" value="Alanine racemase"/>
    <property type="match status" value="1"/>
</dbReference>
<dbReference type="Gene3D" id="2.40.37.10">
    <property type="entry name" value="Lyase, Ornithine Decarboxylase, Chain A, domain 1"/>
    <property type="match status" value="1"/>
</dbReference>
<dbReference type="HAMAP" id="MF_02120">
    <property type="entry name" value="LysA"/>
    <property type="match status" value="1"/>
</dbReference>
<dbReference type="InterPro" id="IPR009006">
    <property type="entry name" value="Ala_racemase/Decarboxylase_C"/>
</dbReference>
<dbReference type="InterPro" id="IPR002986">
    <property type="entry name" value="DAP_deCOOHase_LysA"/>
</dbReference>
<dbReference type="InterPro" id="IPR022643">
    <property type="entry name" value="De-COase2_C"/>
</dbReference>
<dbReference type="InterPro" id="IPR022657">
    <property type="entry name" value="De-COase2_CS"/>
</dbReference>
<dbReference type="InterPro" id="IPR022644">
    <property type="entry name" value="De-COase2_N"/>
</dbReference>
<dbReference type="InterPro" id="IPR022653">
    <property type="entry name" value="De-COase2_pyr-phos_BS"/>
</dbReference>
<dbReference type="InterPro" id="IPR000183">
    <property type="entry name" value="Orn/DAP/Arg_de-COase"/>
</dbReference>
<dbReference type="InterPro" id="IPR029066">
    <property type="entry name" value="PLP-binding_barrel"/>
</dbReference>
<dbReference type="NCBIfam" id="TIGR01048">
    <property type="entry name" value="lysA"/>
    <property type="match status" value="1"/>
</dbReference>
<dbReference type="PANTHER" id="PTHR43727">
    <property type="entry name" value="DIAMINOPIMELATE DECARBOXYLASE"/>
    <property type="match status" value="1"/>
</dbReference>
<dbReference type="PANTHER" id="PTHR43727:SF2">
    <property type="entry name" value="GROUP IV DECARBOXYLASE"/>
    <property type="match status" value="1"/>
</dbReference>
<dbReference type="Pfam" id="PF02784">
    <property type="entry name" value="Orn_Arg_deC_N"/>
    <property type="match status" value="1"/>
</dbReference>
<dbReference type="Pfam" id="PF00278">
    <property type="entry name" value="Orn_DAP_Arg_deC"/>
    <property type="match status" value="1"/>
</dbReference>
<dbReference type="PRINTS" id="PR01181">
    <property type="entry name" value="DAPDCRBXLASE"/>
</dbReference>
<dbReference type="PRINTS" id="PR01179">
    <property type="entry name" value="ODADCRBXLASE"/>
</dbReference>
<dbReference type="SUPFAM" id="SSF50621">
    <property type="entry name" value="Alanine racemase C-terminal domain-like"/>
    <property type="match status" value="1"/>
</dbReference>
<dbReference type="SUPFAM" id="SSF51419">
    <property type="entry name" value="PLP-binding barrel"/>
    <property type="match status" value="1"/>
</dbReference>
<dbReference type="PROSITE" id="PS00878">
    <property type="entry name" value="ODR_DC_2_1"/>
    <property type="match status" value="1"/>
</dbReference>
<dbReference type="PROSITE" id="PS00879">
    <property type="entry name" value="ODR_DC_2_2"/>
    <property type="match status" value="1"/>
</dbReference>
<feature type="transit peptide" description="Chloroplast" evidence="2">
    <location>
        <begin position="1"/>
        <end position="44"/>
    </location>
</feature>
<feature type="chain" id="PRO_0000307178" description="Probable diaminopimelate decarboxylase, chloroplastic">
    <location>
        <begin position="45"/>
        <end position="490"/>
    </location>
</feature>
<feature type="region of interest" description="Disordered" evidence="3">
    <location>
        <begin position="45"/>
        <end position="66"/>
    </location>
</feature>
<feature type="active site" description="Proton donor" evidence="2">
    <location>
        <position position="415"/>
    </location>
</feature>
<feature type="binding site" evidence="1">
    <location>
        <position position="309"/>
    </location>
    <ligand>
        <name>pyridoxal 5'-phosphate</name>
        <dbReference type="ChEBI" id="CHEBI:597326"/>
    </ligand>
</feature>
<feature type="binding site" evidence="1">
    <location>
        <begin position="345"/>
        <end position="348"/>
    </location>
    <ligand>
        <name>pyridoxal 5'-phosphate</name>
        <dbReference type="ChEBI" id="CHEBI:597326"/>
    </ligand>
</feature>
<feature type="binding site" evidence="1">
    <location>
        <position position="348"/>
    </location>
    <ligand>
        <name>substrate</name>
    </ligand>
</feature>
<feature type="binding site" evidence="1">
    <location>
        <position position="384"/>
    </location>
    <ligand>
        <name>substrate</name>
    </ligand>
</feature>
<feature type="binding site" evidence="1">
    <location>
        <position position="388"/>
    </location>
    <ligand>
        <name>substrate</name>
    </ligand>
</feature>
<feature type="binding site" evidence="1">
    <location>
        <position position="416"/>
    </location>
    <ligand>
        <name>substrate</name>
    </ligand>
</feature>
<feature type="binding site" evidence="1">
    <location>
        <position position="444"/>
    </location>
    <ligand>
        <name>pyridoxal 5'-phosphate</name>
        <dbReference type="ChEBI" id="CHEBI:597326"/>
    </ligand>
</feature>
<feature type="binding site" evidence="1">
    <location>
        <position position="444"/>
    </location>
    <ligand>
        <name>substrate</name>
    </ligand>
</feature>
<feature type="modified residue" description="N6-(pyridoxal phosphate)lysine" evidence="1">
    <location>
        <position position="130"/>
    </location>
</feature>
<name>DCDA_ORYSJ</name>
<accession>Q6ZG77</accession>
<accession>A3A6C9</accession>
<accession>A3A6D0</accession>
<accession>B7ED21</accession>
<evidence type="ECO:0000250" key="1"/>
<evidence type="ECO:0000255" key="2"/>
<evidence type="ECO:0000256" key="3">
    <source>
        <dbReference type="SAM" id="MobiDB-lite"/>
    </source>
</evidence>
<evidence type="ECO:0000305" key="4"/>
<reference key="1">
    <citation type="journal article" date="2005" name="Nature">
        <title>The map-based sequence of the rice genome.</title>
        <authorList>
            <consortium name="International rice genome sequencing project (IRGSP)"/>
        </authorList>
    </citation>
    <scope>NUCLEOTIDE SEQUENCE [LARGE SCALE GENOMIC DNA]</scope>
    <source>
        <strain>cv. Nipponbare</strain>
    </source>
</reference>
<reference key="2">
    <citation type="journal article" date="2008" name="Nucleic Acids Res.">
        <title>The rice annotation project database (RAP-DB): 2008 update.</title>
        <authorList>
            <consortium name="The rice annotation project (RAP)"/>
        </authorList>
    </citation>
    <scope>GENOME REANNOTATION</scope>
    <source>
        <strain>cv. Nipponbare</strain>
    </source>
</reference>
<reference key="3">
    <citation type="journal article" date="2013" name="Rice">
        <title>Improvement of the Oryza sativa Nipponbare reference genome using next generation sequence and optical map data.</title>
        <authorList>
            <person name="Kawahara Y."/>
            <person name="de la Bastide M."/>
            <person name="Hamilton J.P."/>
            <person name="Kanamori H."/>
            <person name="McCombie W.R."/>
            <person name="Ouyang S."/>
            <person name="Schwartz D.C."/>
            <person name="Tanaka T."/>
            <person name="Wu J."/>
            <person name="Zhou S."/>
            <person name="Childs K.L."/>
            <person name="Davidson R.M."/>
            <person name="Lin H."/>
            <person name="Quesada-Ocampo L."/>
            <person name="Vaillancourt B."/>
            <person name="Sakai H."/>
            <person name="Lee S.S."/>
            <person name="Kim J."/>
            <person name="Numa H."/>
            <person name="Itoh T."/>
            <person name="Buell C.R."/>
            <person name="Matsumoto T."/>
        </authorList>
    </citation>
    <scope>GENOME REANNOTATION</scope>
    <source>
        <strain>cv. Nipponbare</strain>
    </source>
</reference>
<reference key="4">
    <citation type="journal article" date="2005" name="PLoS Biol.">
        <title>The genomes of Oryza sativa: a history of duplications.</title>
        <authorList>
            <person name="Yu J."/>
            <person name="Wang J."/>
            <person name="Lin W."/>
            <person name="Li S."/>
            <person name="Li H."/>
            <person name="Zhou J."/>
            <person name="Ni P."/>
            <person name="Dong W."/>
            <person name="Hu S."/>
            <person name="Zeng C."/>
            <person name="Zhang J."/>
            <person name="Zhang Y."/>
            <person name="Li R."/>
            <person name="Xu Z."/>
            <person name="Li S."/>
            <person name="Li X."/>
            <person name="Zheng H."/>
            <person name="Cong L."/>
            <person name="Lin L."/>
            <person name="Yin J."/>
            <person name="Geng J."/>
            <person name="Li G."/>
            <person name="Shi J."/>
            <person name="Liu J."/>
            <person name="Lv H."/>
            <person name="Li J."/>
            <person name="Wang J."/>
            <person name="Deng Y."/>
            <person name="Ran L."/>
            <person name="Shi X."/>
            <person name="Wang X."/>
            <person name="Wu Q."/>
            <person name="Li C."/>
            <person name="Ren X."/>
            <person name="Wang J."/>
            <person name="Wang X."/>
            <person name="Li D."/>
            <person name="Liu D."/>
            <person name="Zhang X."/>
            <person name="Ji Z."/>
            <person name="Zhao W."/>
            <person name="Sun Y."/>
            <person name="Zhang Z."/>
            <person name="Bao J."/>
            <person name="Han Y."/>
            <person name="Dong L."/>
            <person name="Ji J."/>
            <person name="Chen P."/>
            <person name="Wu S."/>
            <person name="Liu J."/>
            <person name="Xiao Y."/>
            <person name="Bu D."/>
            <person name="Tan J."/>
            <person name="Yang L."/>
            <person name="Ye C."/>
            <person name="Zhang J."/>
            <person name="Xu J."/>
            <person name="Zhou Y."/>
            <person name="Yu Y."/>
            <person name="Zhang B."/>
            <person name="Zhuang S."/>
            <person name="Wei H."/>
            <person name="Liu B."/>
            <person name="Lei M."/>
            <person name="Yu H."/>
            <person name="Li Y."/>
            <person name="Xu H."/>
            <person name="Wei S."/>
            <person name="He X."/>
            <person name="Fang L."/>
            <person name="Zhang Z."/>
            <person name="Zhang Y."/>
            <person name="Huang X."/>
            <person name="Su Z."/>
            <person name="Tong W."/>
            <person name="Li J."/>
            <person name="Tong Z."/>
            <person name="Li S."/>
            <person name="Ye J."/>
            <person name="Wang L."/>
            <person name="Fang L."/>
            <person name="Lei T."/>
            <person name="Chen C.-S."/>
            <person name="Chen H.-C."/>
            <person name="Xu Z."/>
            <person name="Li H."/>
            <person name="Huang H."/>
            <person name="Zhang F."/>
            <person name="Xu H."/>
            <person name="Li N."/>
            <person name="Zhao C."/>
            <person name="Li S."/>
            <person name="Dong L."/>
            <person name="Huang Y."/>
            <person name="Li L."/>
            <person name="Xi Y."/>
            <person name="Qi Q."/>
            <person name="Li W."/>
            <person name="Zhang B."/>
            <person name="Hu W."/>
            <person name="Zhang Y."/>
            <person name="Tian X."/>
            <person name="Jiao Y."/>
            <person name="Liang X."/>
            <person name="Jin J."/>
            <person name="Gao L."/>
            <person name="Zheng W."/>
            <person name="Hao B."/>
            <person name="Liu S.-M."/>
            <person name="Wang W."/>
            <person name="Yuan L."/>
            <person name="Cao M."/>
            <person name="McDermott J."/>
            <person name="Samudrala R."/>
            <person name="Wang J."/>
            <person name="Wong G.K.-S."/>
            <person name="Yang H."/>
        </authorList>
    </citation>
    <scope>NUCLEOTIDE SEQUENCE [LARGE SCALE GENOMIC DNA]</scope>
    <source>
        <strain>cv. Nipponbare</strain>
    </source>
</reference>
<reference key="5">
    <citation type="journal article" date="2003" name="Science">
        <title>Collection, mapping, and annotation of over 28,000 cDNA clones from japonica rice.</title>
        <authorList>
            <consortium name="The rice full-length cDNA consortium"/>
        </authorList>
    </citation>
    <scope>NUCLEOTIDE SEQUENCE [LARGE SCALE MRNA]</scope>
    <source>
        <strain>cv. Nipponbare</strain>
    </source>
</reference>
<protein>
    <recommendedName>
        <fullName>Probable diaminopimelate decarboxylase, chloroplastic</fullName>
        <shortName>DAP decarboxylase</shortName>
        <shortName>DAPDC</shortName>
        <ecNumber>4.1.1.20</ecNumber>
    </recommendedName>
</protein>
<sequence length="490" mass="53215">MAAANLLSRALLPALNPNPSSHSNRVSPSAVSLRCRHGLTASVRASLSTAAPSPPPRPAAAAADGRAPKRCFRRGADGHLYCEGVRVEDAMGAAERTPFYLYSKPQVVRNFTAYRDALEGLRSIVGYAVKANNNLRVLQLLRELGCGAVLVSGNELRLALRAGFDPTRCIFNGNGKTLEDLVLAAESGVFVNIDSEFDLENIVTAARVAGKKVPVLLRINPDVDPQVHPYVATGNKTSKFGIRNEKLQWFLDSIKSYSNDITLVGVHCHLGSTITKVDIFRDAAGLMVNYVDEIRAQGFELEYLNIGGGLGIDYHHTDAVLPTPMDLINTVRELVLSRDLTLIIEPGRSLIANTCCFVNRVTGVKSNGTKNFIVVDGSMAELIRPSLYGAYQHIELVSPSPDAEVATFDIVGPVCESADFLGKDRELPTPDKGAGLVVHDAGAYCMSMASTYNLKLRPPEYWVEDDGSIAKIRRGESFDDYMKFFDNLSA</sequence>
<comment type="function">
    <text evidence="1">Specifically catalyzes the decarboxylation of meso-diaminopimelate (meso-DAP) to L-lysine.</text>
</comment>
<comment type="catalytic activity">
    <reaction>
        <text>meso-2,6-diaminopimelate + H(+) = L-lysine + CO2</text>
        <dbReference type="Rhea" id="RHEA:15101"/>
        <dbReference type="ChEBI" id="CHEBI:15378"/>
        <dbReference type="ChEBI" id="CHEBI:16526"/>
        <dbReference type="ChEBI" id="CHEBI:32551"/>
        <dbReference type="ChEBI" id="CHEBI:57791"/>
        <dbReference type="EC" id="4.1.1.20"/>
    </reaction>
</comment>
<comment type="cofactor">
    <cofactor evidence="1">
        <name>pyridoxal 5'-phosphate</name>
        <dbReference type="ChEBI" id="CHEBI:597326"/>
    </cofactor>
</comment>
<comment type="pathway">
    <text>Amino-acid biosynthesis; L-lysine biosynthesis via DAP pathway; L-lysine from DL-2,6-diaminopimelate: step 1/1.</text>
</comment>
<comment type="subunit">
    <text evidence="1">Homodimer.</text>
</comment>
<comment type="subcellular location">
    <subcellularLocation>
        <location evidence="4">Plastid</location>
        <location evidence="4">Chloroplast</location>
    </subcellularLocation>
</comment>
<comment type="similarity">
    <text evidence="4">Belongs to the Orn/Lys/Arg decarboxylase class-II family. LysA subfamily.</text>
</comment>
<comment type="sequence caution" evidence="4">
    <conflict type="erroneous gene model prediction">
        <sequence resource="EMBL-CDS" id="EAZ22869"/>
    </conflict>
</comment>
<keyword id="KW-0028">Amino-acid biosynthesis</keyword>
<keyword id="KW-0150">Chloroplast</keyword>
<keyword id="KW-0210">Decarboxylase</keyword>
<keyword id="KW-0456">Lyase</keyword>
<keyword id="KW-0457">Lysine biosynthesis</keyword>
<keyword id="KW-0934">Plastid</keyword>
<keyword id="KW-0663">Pyridoxal phosphate</keyword>
<keyword id="KW-1185">Reference proteome</keyword>
<keyword id="KW-0809">Transit peptide</keyword>
<gene>
    <name type="primary">LYSA</name>
    <name type="ordered locus">Os02g0440000</name>
    <name type="ordered locus">LOC_Os02g24354</name>
    <name type="ORF">OJ1008_E02.6</name>
    <name type="ORF">OsJ_006351/OsJ_006352</name>
</gene>
<organism>
    <name type="scientific">Oryza sativa subsp. japonica</name>
    <name type="common">Rice</name>
    <dbReference type="NCBI Taxonomy" id="39947"/>
    <lineage>
        <taxon>Eukaryota</taxon>
        <taxon>Viridiplantae</taxon>
        <taxon>Streptophyta</taxon>
        <taxon>Embryophyta</taxon>
        <taxon>Tracheophyta</taxon>
        <taxon>Spermatophyta</taxon>
        <taxon>Magnoliopsida</taxon>
        <taxon>Liliopsida</taxon>
        <taxon>Poales</taxon>
        <taxon>Poaceae</taxon>
        <taxon>BOP clade</taxon>
        <taxon>Oryzoideae</taxon>
        <taxon>Oryzeae</taxon>
        <taxon>Oryzinae</taxon>
        <taxon>Oryza</taxon>
        <taxon>Oryza sativa</taxon>
    </lineage>
</organism>
<proteinExistence type="evidence at transcript level"/>